<comment type="function">
    <text evidence="1">Required for normal mitochondrial respiration. Increases steady-state levels and half-lives of a subset of mature mitochondrial mRNAs MT-ND2, MT-ND3, MT-CYTB, MT-CO2, and MT-ATP8/6. Promotes MT-CO1 mRNA translation and increases mitochondrial complex IV assembly and activity.</text>
</comment>
<comment type="subcellular location">
    <subcellularLocation>
        <location evidence="1">Mitochondrion</location>
    </subcellularLocation>
</comment>
<comment type="alternative products">
    <event type="alternative splicing"/>
    <isoform>
        <id>Q8BSN9-1</id>
        <name>1</name>
        <sequence type="displayed"/>
    </isoform>
    <isoform>
        <id>Q8BSN9-2</id>
        <name>2</name>
        <sequence type="described" ref="VSP_024625 VSP_024626"/>
    </isoform>
    <isoform>
        <id>Q8BSN9-3</id>
        <name>3</name>
        <sequence type="described" ref="VSP_024624"/>
    </isoform>
</comment>
<comment type="tissue specificity">
    <text evidence="3">Expression detected in spleen, testis, colon, heart, smooth muscle, kidney, brain, lung, liver, brown and white adipose tissue with highest expression in testis and smooth muscle.</text>
</comment>
<comment type="domain">
    <text evidence="1">RAP domain is required for FASTKD3 function in mRNA stability and translation.</text>
</comment>
<comment type="similarity">
    <text evidence="6">Belongs to the FAST kinase family.</text>
</comment>
<comment type="sequence caution" evidence="6">
    <conflict type="frameshift">
        <sequence resource="EMBL-CDS" id="BAC27277"/>
    </conflict>
</comment>
<accession>Q8BSN9</accession>
<accession>Q5XKD3</accession>
<accession>Q6P9N4</accession>
<accession>Q8CB52</accession>
<accession>Q8CCG7</accession>
<sequence length="661" mass="75317">MAFITLRRAFCHKSILWIPGAVVALKIHPASHAPKAVTDRLSVCFCSLQPELFRVRFHHAYCKNFHSEKGNDFHPVGEPWSSQAQEWNQPGQSLQNEDEEMLFRRLSYFTSFEEVLSFISALDTLPVPLAMAALLRICEIGRRDGEQRLPEGVLENRAFQALCLRCERDPSHLTNAGLVTALQSLLTLLPADPQSSLMLSLVAECQRRLQRGNLEVHHLCVLGESLAMLQGASCETLKLVVRQLQSKSVETFAPEEITSVYRILQVCPEEVDKHQMFLNTLNNFSISVVPYLSPKSISHVLTALVALDQTHALPLLIKLGKYVVRYIPRFTNEELRKVLEAFVYFGHSDRFFTEALEQHVSALCFSLDPAVASSVMGYCSRKRILSKPIFDVVSEIVVCQWDRLSPSQIAELIEPFGKLNYVPPNAPALFRKVENVLCARLHHFPPKMLLRLLHSCALIERHPVNFMSKLFSPFFLQRLQGKESYLDRLSLAQLTQLFLTSVLECPFYKGPKLLPKYQVKSFLTPCCSLETPLDLHLYKSVVIGLIDLLGSRLYFASKVLTPYYYTIDVEVKLDEDGFVLPCTVDEDIHKRVALCIDGPQRFCLDSKHLLGKEATKQRHLRLLGYQVVQLPYHELELLTSRLELVDYLQRKLFSQSSAVHW</sequence>
<dbReference type="EMBL" id="AK031142">
    <property type="protein sequence ID" value="BAC27277.1"/>
    <property type="status" value="ALT_FRAME"/>
    <property type="molecule type" value="mRNA"/>
</dbReference>
<dbReference type="EMBL" id="AK033189">
    <property type="protein sequence ID" value="BAC28191.1"/>
    <property type="molecule type" value="mRNA"/>
</dbReference>
<dbReference type="EMBL" id="AK036778">
    <property type="protein sequence ID" value="BAC29573.1"/>
    <property type="molecule type" value="mRNA"/>
</dbReference>
<dbReference type="EMBL" id="BC042506">
    <property type="protein sequence ID" value="AAH42506.1"/>
    <property type="molecule type" value="mRNA"/>
</dbReference>
<dbReference type="EMBL" id="BC060688">
    <property type="protein sequence ID" value="AAH60688.1"/>
    <property type="molecule type" value="mRNA"/>
</dbReference>
<dbReference type="CCDS" id="CCDS36719.1">
    <molecule id="Q8BSN9-1"/>
</dbReference>
<dbReference type="RefSeq" id="NP_001317352.1">
    <molecule id="Q8BSN9-1"/>
    <property type="nucleotide sequence ID" value="NM_001330423.1"/>
</dbReference>
<dbReference type="RefSeq" id="NP_081399.3">
    <molecule id="Q8BSN9-1"/>
    <property type="nucleotide sequence ID" value="NM_027123.5"/>
</dbReference>
<dbReference type="SMR" id="Q8BSN9"/>
<dbReference type="FunCoup" id="Q8BSN9">
    <property type="interactions" value="2586"/>
</dbReference>
<dbReference type="STRING" id="10090.ENSMUSP00000061737"/>
<dbReference type="iPTMnet" id="Q8BSN9"/>
<dbReference type="PhosphoSitePlus" id="Q8BSN9"/>
<dbReference type="PaxDb" id="10090-ENSMUSP00000061737"/>
<dbReference type="PeptideAtlas" id="Q8BSN9"/>
<dbReference type="ProteomicsDB" id="271858">
    <molecule id="Q8BSN9-1"/>
</dbReference>
<dbReference type="ProteomicsDB" id="271859">
    <molecule id="Q8BSN9-2"/>
</dbReference>
<dbReference type="ProteomicsDB" id="271860">
    <molecule id="Q8BSN9-3"/>
</dbReference>
<dbReference type="Antibodypedia" id="22426">
    <property type="antibodies" value="183 antibodies from 28 providers"/>
</dbReference>
<dbReference type="DNASU" id="69577"/>
<dbReference type="Ensembl" id="ENSMUST00000051784.10">
    <molecule id="Q8BSN9-1"/>
    <property type="protein sequence ID" value="ENSMUSP00000061737.9"/>
    <property type="gene ID" value="ENSMUSG00000021532.12"/>
</dbReference>
<dbReference type="Ensembl" id="ENSMUST00000223319.2">
    <molecule id="Q8BSN9-2"/>
    <property type="protein sequence ID" value="ENSMUSP00000152635.2"/>
    <property type="gene ID" value="ENSMUSG00000021532.12"/>
</dbReference>
<dbReference type="GeneID" id="69577"/>
<dbReference type="KEGG" id="mmu:69577"/>
<dbReference type="UCSC" id="uc007rca.1">
    <molecule id="Q8BSN9-1"/>
    <property type="organism name" value="mouse"/>
</dbReference>
<dbReference type="AGR" id="MGI:1916827"/>
<dbReference type="CTD" id="79072"/>
<dbReference type="MGI" id="MGI:1916827">
    <property type="gene designation" value="Fastkd3"/>
</dbReference>
<dbReference type="VEuPathDB" id="HostDB:ENSMUSG00000021532"/>
<dbReference type="eggNOG" id="ENOG502QW8P">
    <property type="taxonomic scope" value="Eukaryota"/>
</dbReference>
<dbReference type="GeneTree" id="ENSGT01030000234607"/>
<dbReference type="HOGENOM" id="CLU_028858_0_0_1"/>
<dbReference type="InParanoid" id="Q8BSN9"/>
<dbReference type="OMA" id="VQIPYHE"/>
<dbReference type="OrthoDB" id="9985850at2759"/>
<dbReference type="PhylomeDB" id="Q8BSN9"/>
<dbReference type="TreeFam" id="TF324885"/>
<dbReference type="BioGRID-ORCS" id="69577">
    <property type="hits" value="5 hits in 79 CRISPR screens"/>
</dbReference>
<dbReference type="ChiTaRS" id="Fastkd3">
    <property type="organism name" value="mouse"/>
</dbReference>
<dbReference type="PRO" id="PR:Q8BSN9"/>
<dbReference type="Proteomes" id="UP000000589">
    <property type="component" value="Chromosome 13"/>
</dbReference>
<dbReference type="RNAct" id="Q8BSN9">
    <property type="molecule type" value="protein"/>
</dbReference>
<dbReference type="Bgee" id="ENSMUSG00000021532">
    <property type="expression patterns" value="Expressed in cleaving embryo and 212 other cell types or tissues"/>
</dbReference>
<dbReference type="ExpressionAtlas" id="Q8BSN9">
    <property type="expression patterns" value="baseline and differential"/>
</dbReference>
<dbReference type="GO" id="GO:0005739">
    <property type="term" value="C:mitochondrion"/>
    <property type="evidence" value="ECO:0000250"/>
    <property type="project" value="UniProtKB"/>
</dbReference>
<dbReference type="GO" id="GO:0005654">
    <property type="term" value="C:nucleoplasm"/>
    <property type="evidence" value="ECO:0007669"/>
    <property type="project" value="Ensembl"/>
</dbReference>
<dbReference type="GO" id="GO:0033617">
    <property type="term" value="P:mitochondrial cytochrome c oxidase assembly"/>
    <property type="evidence" value="ECO:0000250"/>
    <property type="project" value="UniProtKB"/>
</dbReference>
<dbReference type="GO" id="GO:0070131">
    <property type="term" value="P:positive regulation of mitochondrial translation"/>
    <property type="evidence" value="ECO:0000250"/>
    <property type="project" value="UniProtKB"/>
</dbReference>
<dbReference type="GO" id="GO:0044528">
    <property type="term" value="P:regulation of mitochondrial mRNA stability"/>
    <property type="evidence" value="ECO:0000250"/>
    <property type="project" value="UniProtKB"/>
</dbReference>
<dbReference type="InterPro" id="IPR013579">
    <property type="entry name" value="FAST_2"/>
</dbReference>
<dbReference type="InterPro" id="IPR050870">
    <property type="entry name" value="FAST_kinase"/>
</dbReference>
<dbReference type="InterPro" id="IPR010622">
    <property type="entry name" value="FAST_Leu-rich"/>
</dbReference>
<dbReference type="InterPro" id="IPR013584">
    <property type="entry name" value="RAP"/>
</dbReference>
<dbReference type="PANTHER" id="PTHR21228:SF9">
    <property type="entry name" value="FAST KINASE DOMAIN-CONTAINING PROTEIN 3, MITOCHONDRIAL"/>
    <property type="match status" value="1"/>
</dbReference>
<dbReference type="PANTHER" id="PTHR21228">
    <property type="entry name" value="FAST LEU-RICH DOMAIN-CONTAINING"/>
    <property type="match status" value="1"/>
</dbReference>
<dbReference type="Pfam" id="PF06743">
    <property type="entry name" value="FAST_1"/>
    <property type="match status" value="1"/>
</dbReference>
<dbReference type="Pfam" id="PF08368">
    <property type="entry name" value="FAST_2"/>
    <property type="match status" value="1"/>
</dbReference>
<dbReference type="Pfam" id="PF08373">
    <property type="entry name" value="RAP"/>
    <property type="match status" value="1"/>
</dbReference>
<dbReference type="SMART" id="SM00952">
    <property type="entry name" value="RAP"/>
    <property type="match status" value="1"/>
</dbReference>
<dbReference type="PROSITE" id="PS51286">
    <property type="entry name" value="RAP"/>
    <property type="match status" value="1"/>
</dbReference>
<proteinExistence type="evidence at transcript level"/>
<keyword id="KW-0025">Alternative splicing</keyword>
<keyword id="KW-0496">Mitochondrion</keyword>
<keyword id="KW-1185">Reference proteome</keyword>
<keyword id="KW-0809">Transit peptide</keyword>
<organism>
    <name type="scientific">Mus musculus</name>
    <name type="common">Mouse</name>
    <dbReference type="NCBI Taxonomy" id="10090"/>
    <lineage>
        <taxon>Eukaryota</taxon>
        <taxon>Metazoa</taxon>
        <taxon>Chordata</taxon>
        <taxon>Craniata</taxon>
        <taxon>Vertebrata</taxon>
        <taxon>Euteleostomi</taxon>
        <taxon>Mammalia</taxon>
        <taxon>Eutheria</taxon>
        <taxon>Euarchontoglires</taxon>
        <taxon>Glires</taxon>
        <taxon>Rodentia</taxon>
        <taxon>Myomorpha</taxon>
        <taxon>Muroidea</taxon>
        <taxon>Muridae</taxon>
        <taxon>Murinae</taxon>
        <taxon>Mus</taxon>
        <taxon>Mus</taxon>
    </lineage>
</organism>
<reference key="1">
    <citation type="journal article" date="2005" name="Science">
        <title>The transcriptional landscape of the mammalian genome.</title>
        <authorList>
            <person name="Carninci P."/>
            <person name="Kasukawa T."/>
            <person name="Katayama S."/>
            <person name="Gough J."/>
            <person name="Frith M.C."/>
            <person name="Maeda N."/>
            <person name="Oyama R."/>
            <person name="Ravasi T."/>
            <person name="Lenhard B."/>
            <person name="Wells C."/>
            <person name="Kodzius R."/>
            <person name="Shimokawa K."/>
            <person name="Bajic V.B."/>
            <person name="Brenner S.E."/>
            <person name="Batalov S."/>
            <person name="Forrest A.R."/>
            <person name="Zavolan M."/>
            <person name="Davis M.J."/>
            <person name="Wilming L.G."/>
            <person name="Aidinis V."/>
            <person name="Allen J.E."/>
            <person name="Ambesi-Impiombato A."/>
            <person name="Apweiler R."/>
            <person name="Aturaliya R.N."/>
            <person name="Bailey T.L."/>
            <person name="Bansal M."/>
            <person name="Baxter L."/>
            <person name="Beisel K.W."/>
            <person name="Bersano T."/>
            <person name="Bono H."/>
            <person name="Chalk A.M."/>
            <person name="Chiu K.P."/>
            <person name="Choudhary V."/>
            <person name="Christoffels A."/>
            <person name="Clutterbuck D.R."/>
            <person name="Crowe M.L."/>
            <person name="Dalla E."/>
            <person name="Dalrymple B.P."/>
            <person name="de Bono B."/>
            <person name="Della Gatta G."/>
            <person name="di Bernardo D."/>
            <person name="Down T."/>
            <person name="Engstrom P."/>
            <person name="Fagiolini M."/>
            <person name="Faulkner G."/>
            <person name="Fletcher C.F."/>
            <person name="Fukushima T."/>
            <person name="Furuno M."/>
            <person name="Futaki S."/>
            <person name="Gariboldi M."/>
            <person name="Georgii-Hemming P."/>
            <person name="Gingeras T.R."/>
            <person name="Gojobori T."/>
            <person name="Green R.E."/>
            <person name="Gustincich S."/>
            <person name="Harbers M."/>
            <person name="Hayashi Y."/>
            <person name="Hensch T.K."/>
            <person name="Hirokawa N."/>
            <person name="Hill D."/>
            <person name="Huminiecki L."/>
            <person name="Iacono M."/>
            <person name="Ikeo K."/>
            <person name="Iwama A."/>
            <person name="Ishikawa T."/>
            <person name="Jakt M."/>
            <person name="Kanapin A."/>
            <person name="Katoh M."/>
            <person name="Kawasawa Y."/>
            <person name="Kelso J."/>
            <person name="Kitamura H."/>
            <person name="Kitano H."/>
            <person name="Kollias G."/>
            <person name="Krishnan S.P."/>
            <person name="Kruger A."/>
            <person name="Kummerfeld S.K."/>
            <person name="Kurochkin I.V."/>
            <person name="Lareau L.F."/>
            <person name="Lazarevic D."/>
            <person name="Lipovich L."/>
            <person name="Liu J."/>
            <person name="Liuni S."/>
            <person name="McWilliam S."/>
            <person name="Madan Babu M."/>
            <person name="Madera M."/>
            <person name="Marchionni L."/>
            <person name="Matsuda H."/>
            <person name="Matsuzawa S."/>
            <person name="Miki H."/>
            <person name="Mignone F."/>
            <person name="Miyake S."/>
            <person name="Morris K."/>
            <person name="Mottagui-Tabar S."/>
            <person name="Mulder N."/>
            <person name="Nakano N."/>
            <person name="Nakauchi H."/>
            <person name="Ng P."/>
            <person name="Nilsson R."/>
            <person name="Nishiguchi S."/>
            <person name="Nishikawa S."/>
            <person name="Nori F."/>
            <person name="Ohara O."/>
            <person name="Okazaki Y."/>
            <person name="Orlando V."/>
            <person name="Pang K.C."/>
            <person name="Pavan W.J."/>
            <person name="Pavesi G."/>
            <person name="Pesole G."/>
            <person name="Petrovsky N."/>
            <person name="Piazza S."/>
            <person name="Reed J."/>
            <person name="Reid J.F."/>
            <person name="Ring B.Z."/>
            <person name="Ringwald M."/>
            <person name="Rost B."/>
            <person name="Ruan Y."/>
            <person name="Salzberg S.L."/>
            <person name="Sandelin A."/>
            <person name="Schneider C."/>
            <person name="Schoenbach C."/>
            <person name="Sekiguchi K."/>
            <person name="Semple C.A."/>
            <person name="Seno S."/>
            <person name="Sessa L."/>
            <person name="Sheng Y."/>
            <person name="Shibata Y."/>
            <person name="Shimada H."/>
            <person name="Shimada K."/>
            <person name="Silva D."/>
            <person name="Sinclair B."/>
            <person name="Sperling S."/>
            <person name="Stupka E."/>
            <person name="Sugiura K."/>
            <person name="Sultana R."/>
            <person name="Takenaka Y."/>
            <person name="Taki K."/>
            <person name="Tammoja K."/>
            <person name="Tan S.L."/>
            <person name="Tang S."/>
            <person name="Taylor M.S."/>
            <person name="Tegner J."/>
            <person name="Teichmann S.A."/>
            <person name="Ueda H.R."/>
            <person name="van Nimwegen E."/>
            <person name="Verardo R."/>
            <person name="Wei C.L."/>
            <person name="Yagi K."/>
            <person name="Yamanishi H."/>
            <person name="Zabarovsky E."/>
            <person name="Zhu S."/>
            <person name="Zimmer A."/>
            <person name="Hide W."/>
            <person name="Bult C."/>
            <person name="Grimmond S.M."/>
            <person name="Teasdale R.D."/>
            <person name="Liu E.T."/>
            <person name="Brusic V."/>
            <person name="Quackenbush J."/>
            <person name="Wahlestedt C."/>
            <person name="Mattick J.S."/>
            <person name="Hume D.A."/>
            <person name="Kai C."/>
            <person name="Sasaki D."/>
            <person name="Tomaru Y."/>
            <person name="Fukuda S."/>
            <person name="Kanamori-Katayama M."/>
            <person name="Suzuki M."/>
            <person name="Aoki J."/>
            <person name="Arakawa T."/>
            <person name="Iida J."/>
            <person name="Imamura K."/>
            <person name="Itoh M."/>
            <person name="Kato T."/>
            <person name="Kawaji H."/>
            <person name="Kawagashira N."/>
            <person name="Kawashima T."/>
            <person name="Kojima M."/>
            <person name="Kondo S."/>
            <person name="Konno H."/>
            <person name="Nakano K."/>
            <person name="Ninomiya N."/>
            <person name="Nishio T."/>
            <person name="Okada M."/>
            <person name="Plessy C."/>
            <person name="Shibata K."/>
            <person name="Shiraki T."/>
            <person name="Suzuki S."/>
            <person name="Tagami M."/>
            <person name="Waki K."/>
            <person name="Watahiki A."/>
            <person name="Okamura-Oho Y."/>
            <person name="Suzuki H."/>
            <person name="Kawai J."/>
            <person name="Hayashizaki Y."/>
        </authorList>
    </citation>
    <scope>NUCLEOTIDE SEQUENCE [LARGE SCALE MRNA] (ISOFORMS 1 AND 2)</scope>
    <source>
        <strain>C57BL/6J</strain>
        <tissue>Forelimb</tissue>
        <tissue>Testis</tissue>
        <tissue>Vagina</tissue>
    </source>
</reference>
<reference key="2">
    <citation type="journal article" date="2004" name="Genome Res.">
        <title>The status, quality, and expansion of the NIH full-length cDNA project: the Mammalian Gene Collection (MGC).</title>
        <authorList>
            <consortium name="The MGC Project Team"/>
        </authorList>
    </citation>
    <scope>NUCLEOTIDE SEQUENCE [LARGE SCALE MRNA] (ISOFORMS 2 AND 3)</scope>
    <source>
        <strain>C57BL/6J</strain>
        <tissue>Brain</tissue>
        <tissue>Mammary tumor</tissue>
    </source>
</reference>
<reference key="3">
    <citation type="journal article" date="2010" name="Biochem. Biophys. Res. Commun.">
        <title>Fast kinase domain-containing protein 3 is a mitochondrial protein essential for cellular respiration.</title>
        <authorList>
            <person name="Simarro M."/>
            <person name="Gimenez-Cassina A."/>
            <person name="Kedersha N."/>
            <person name="Lazaro J.B."/>
            <person name="Adelmant G.O."/>
            <person name="Marto J.A."/>
            <person name="Rhee K."/>
            <person name="Tisdale S."/>
            <person name="Danial N."/>
            <person name="Benarafa C."/>
            <person name="Orduna A."/>
            <person name="Anderson P."/>
        </authorList>
    </citation>
    <scope>TISSUE SPECIFICITY</scope>
</reference>
<feature type="transit peptide" description="Mitochondrion" evidence="6">
    <location>
        <begin position="1"/>
        <end status="unknown"/>
    </location>
</feature>
<feature type="chain" id="PRO_0000284716" description="FAST kinase domain-containing protein 3, mitochondrial">
    <location>
        <begin status="unknown"/>
        <end position="661"/>
    </location>
</feature>
<feature type="domain" description="RAP" evidence="2">
    <location>
        <begin position="592"/>
        <end position="650"/>
    </location>
</feature>
<feature type="splice variant" id="VSP_024624" description="In isoform 3." evidence="4">
    <original>GPKLLPKYQVKSFLTPCCSLETPLDLHLYKSVVIGLIDLLGSRLYFASKVLTPYYYTIDVEVKLDEDGFVLPCTVDEDIHKRVALCIDGPQRFCLDSKHLLGKEATKQRHLRLLGYQVVQLPYHELELLTSRLELVDYLQRKLFSQSSAVHW</original>
    <variation>VRTETRVV</variation>
    <location>
        <begin position="510"/>
        <end position="661"/>
    </location>
</feature>
<feature type="splice variant" id="VSP_024625" description="In isoform 2." evidence="4 5">
    <original>DVEV</original>
    <variation>ASAL</variation>
    <location>
        <begin position="568"/>
        <end position="571"/>
    </location>
</feature>
<feature type="splice variant" id="VSP_024626" description="In isoform 2." evidence="4 5">
    <location>
        <begin position="572"/>
        <end position="661"/>
    </location>
</feature>
<feature type="sequence conflict" description="In Ref. 2; AAH42506." evidence="6" ref="2">
    <original>P</original>
    <variation>Q</variation>
    <location>
        <position position="34"/>
    </location>
</feature>
<feature type="sequence conflict" description="In Ref. 2; AAH42506." evidence="6" ref="2">
    <original>Y</original>
    <variation>V</variation>
    <location>
        <position position="108"/>
    </location>
</feature>
<feature type="sequence conflict" description="In Ref. 2; AAH42506." evidence="6" ref="2">
    <original>N</original>
    <variation>S</variation>
    <location>
        <position position="175"/>
    </location>
</feature>
<feature type="sequence conflict" description="In Ref. 2; AAH42506." evidence="6" ref="2">
    <original>T</original>
    <variation>A</variation>
    <location>
        <position position="258"/>
    </location>
</feature>
<feature type="sequence conflict" description="In Ref. 2; AAH42506." evidence="6" ref="2">
    <original>V</original>
    <variation>A</variation>
    <location>
        <position position="266"/>
    </location>
</feature>
<feature type="sequence conflict" description="In Ref. 2; AAH42506." evidence="6" ref="2">
    <original>M</original>
    <variation>T</variation>
    <location>
        <position position="276"/>
    </location>
</feature>
<feature type="sequence conflict" description="In Ref. 2; AAH42506." evidence="6" ref="2">
    <original>L</original>
    <variation>M</variation>
    <location>
        <position position="533"/>
    </location>
</feature>
<name>FAKD3_MOUSE</name>
<evidence type="ECO:0000250" key="1">
    <source>
        <dbReference type="UniProtKB" id="Q14CZ7"/>
    </source>
</evidence>
<evidence type="ECO:0000255" key="2">
    <source>
        <dbReference type="PROSITE-ProRule" id="PRU00619"/>
    </source>
</evidence>
<evidence type="ECO:0000269" key="3">
    <source>
    </source>
</evidence>
<evidence type="ECO:0000303" key="4">
    <source>
    </source>
</evidence>
<evidence type="ECO:0000303" key="5">
    <source>
    </source>
</evidence>
<evidence type="ECO:0000305" key="6"/>
<gene>
    <name type="primary">Fastkd3</name>
</gene>
<protein>
    <recommendedName>
        <fullName>FAST kinase domain-containing protein 3, mitochondrial</fullName>
    </recommendedName>
</protein>